<protein>
    <recommendedName>
        <fullName evidence="1">Holo-[acyl-carrier-protein] synthase</fullName>
        <shortName evidence="1">Holo-ACP synthase</shortName>
        <ecNumber evidence="1">2.7.8.7</ecNumber>
    </recommendedName>
    <alternativeName>
        <fullName evidence="1">4'-phosphopantetheinyl transferase AcpS</fullName>
    </alternativeName>
</protein>
<keyword id="KW-0963">Cytoplasm</keyword>
<keyword id="KW-0275">Fatty acid biosynthesis</keyword>
<keyword id="KW-0276">Fatty acid metabolism</keyword>
<keyword id="KW-0444">Lipid biosynthesis</keyword>
<keyword id="KW-0443">Lipid metabolism</keyword>
<keyword id="KW-0460">Magnesium</keyword>
<keyword id="KW-0479">Metal-binding</keyword>
<keyword id="KW-1185">Reference proteome</keyword>
<keyword id="KW-0808">Transferase</keyword>
<feature type="chain" id="PRO_1000071294" description="Holo-[acyl-carrier-protein] synthase">
    <location>
        <begin position="1"/>
        <end position="136"/>
    </location>
</feature>
<feature type="binding site" evidence="1">
    <location>
        <position position="8"/>
    </location>
    <ligand>
        <name>Mg(2+)</name>
        <dbReference type="ChEBI" id="CHEBI:18420"/>
    </ligand>
</feature>
<feature type="binding site" evidence="1">
    <location>
        <position position="57"/>
    </location>
    <ligand>
        <name>Mg(2+)</name>
        <dbReference type="ChEBI" id="CHEBI:18420"/>
    </ligand>
</feature>
<dbReference type="EC" id="2.7.8.7" evidence="1"/>
<dbReference type="EMBL" id="AP009384">
    <property type="protein sequence ID" value="BAF88000.1"/>
    <property type="molecule type" value="Genomic_DNA"/>
</dbReference>
<dbReference type="RefSeq" id="WP_012170529.1">
    <property type="nucleotide sequence ID" value="NC_009937.1"/>
</dbReference>
<dbReference type="SMR" id="A8I3B0"/>
<dbReference type="STRING" id="438753.AZC_2002"/>
<dbReference type="KEGG" id="azc:AZC_2002"/>
<dbReference type="eggNOG" id="COG0736">
    <property type="taxonomic scope" value="Bacteria"/>
</dbReference>
<dbReference type="HOGENOM" id="CLU_089696_0_2_5"/>
<dbReference type="Proteomes" id="UP000000270">
    <property type="component" value="Chromosome"/>
</dbReference>
<dbReference type="GO" id="GO:0005737">
    <property type="term" value="C:cytoplasm"/>
    <property type="evidence" value="ECO:0007669"/>
    <property type="project" value="UniProtKB-SubCell"/>
</dbReference>
<dbReference type="GO" id="GO:0008897">
    <property type="term" value="F:holo-[acyl-carrier-protein] synthase activity"/>
    <property type="evidence" value="ECO:0007669"/>
    <property type="project" value="UniProtKB-UniRule"/>
</dbReference>
<dbReference type="GO" id="GO:0000287">
    <property type="term" value="F:magnesium ion binding"/>
    <property type="evidence" value="ECO:0007669"/>
    <property type="project" value="UniProtKB-UniRule"/>
</dbReference>
<dbReference type="GO" id="GO:0006633">
    <property type="term" value="P:fatty acid biosynthetic process"/>
    <property type="evidence" value="ECO:0007669"/>
    <property type="project" value="UniProtKB-UniRule"/>
</dbReference>
<dbReference type="Gene3D" id="3.90.470.20">
    <property type="entry name" value="4'-phosphopantetheinyl transferase domain"/>
    <property type="match status" value="1"/>
</dbReference>
<dbReference type="HAMAP" id="MF_00101">
    <property type="entry name" value="AcpS"/>
    <property type="match status" value="1"/>
</dbReference>
<dbReference type="InterPro" id="IPR008278">
    <property type="entry name" value="4-PPantetheinyl_Trfase_dom"/>
</dbReference>
<dbReference type="InterPro" id="IPR037143">
    <property type="entry name" value="4-PPantetheinyl_Trfase_dom_sf"/>
</dbReference>
<dbReference type="InterPro" id="IPR002582">
    <property type="entry name" value="ACPS"/>
</dbReference>
<dbReference type="InterPro" id="IPR004568">
    <property type="entry name" value="Ppantetheine-prot_Trfase_dom"/>
</dbReference>
<dbReference type="NCBIfam" id="TIGR00516">
    <property type="entry name" value="acpS"/>
    <property type="match status" value="1"/>
</dbReference>
<dbReference type="NCBIfam" id="TIGR00556">
    <property type="entry name" value="pantethn_trn"/>
    <property type="match status" value="1"/>
</dbReference>
<dbReference type="Pfam" id="PF01648">
    <property type="entry name" value="ACPS"/>
    <property type="match status" value="1"/>
</dbReference>
<dbReference type="SUPFAM" id="SSF56214">
    <property type="entry name" value="4'-phosphopantetheinyl transferase"/>
    <property type="match status" value="1"/>
</dbReference>
<name>ACPS_AZOC5</name>
<sequence length="136" mass="14799">MILGIGSDFCDARRIEKSIERFGARFTERVFTPLERAKAERRARPAETYAKRFAAKEACAKALGTGIARGVFWRDMGVVNLPSGQPTLELTGGAAARLKEMVPEGYEPRIALSLTDEGPLSAAYVIISAELIGTPR</sequence>
<gene>
    <name evidence="1" type="primary">acpS</name>
    <name type="ordered locus">AZC_2002</name>
</gene>
<reference key="1">
    <citation type="submission" date="2007-04" db="EMBL/GenBank/DDBJ databases">
        <title>Complete genome sequence of the nitrogen-fixing bacterium Azorhizobium caulinodans ORS571.</title>
        <authorList>
            <person name="Lee K.B."/>
            <person name="Backer P.D."/>
            <person name="Aono T."/>
            <person name="Liu C.T."/>
            <person name="Suzuki S."/>
            <person name="Suzuki T."/>
            <person name="Kaneko T."/>
            <person name="Yamada M."/>
            <person name="Tabata S."/>
            <person name="Kupfer D.M."/>
            <person name="Najar F.Z."/>
            <person name="Wiley G.B."/>
            <person name="Roe B."/>
            <person name="Binnewies T."/>
            <person name="Ussery D."/>
            <person name="Vereecke D."/>
            <person name="Gevers D."/>
            <person name="Holsters M."/>
            <person name="Oyaizu H."/>
        </authorList>
    </citation>
    <scope>NUCLEOTIDE SEQUENCE [LARGE SCALE GENOMIC DNA]</scope>
    <source>
        <strain>ATCC 43989 / DSM 5975 / JCM 20966 / LMG 6465 / NBRC 14845 / NCIMB 13405 / ORS 571</strain>
    </source>
</reference>
<organism>
    <name type="scientific">Azorhizobium caulinodans (strain ATCC 43989 / DSM 5975 / JCM 20966 / LMG 6465 / NBRC 14845 / NCIMB 13405 / ORS 571)</name>
    <dbReference type="NCBI Taxonomy" id="438753"/>
    <lineage>
        <taxon>Bacteria</taxon>
        <taxon>Pseudomonadati</taxon>
        <taxon>Pseudomonadota</taxon>
        <taxon>Alphaproteobacteria</taxon>
        <taxon>Hyphomicrobiales</taxon>
        <taxon>Xanthobacteraceae</taxon>
        <taxon>Azorhizobium</taxon>
    </lineage>
</organism>
<comment type="function">
    <text evidence="1">Transfers the 4'-phosphopantetheine moiety from coenzyme A to a Ser of acyl-carrier-protein.</text>
</comment>
<comment type="catalytic activity">
    <reaction evidence="1">
        <text>apo-[ACP] + CoA = holo-[ACP] + adenosine 3',5'-bisphosphate + H(+)</text>
        <dbReference type="Rhea" id="RHEA:12068"/>
        <dbReference type="Rhea" id="RHEA-COMP:9685"/>
        <dbReference type="Rhea" id="RHEA-COMP:9690"/>
        <dbReference type="ChEBI" id="CHEBI:15378"/>
        <dbReference type="ChEBI" id="CHEBI:29999"/>
        <dbReference type="ChEBI" id="CHEBI:57287"/>
        <dbReference type="ChEBI" id="CHEBI:58343"/>
        <dbReference type="ChEBI" id="CHEBI:64479"/>
        <dbReference type="EC" id="2.7.8.7"/>
    </reaction>
</comment>
<comment type="cofactor">
    <cofactor evidence="1">
        <name>Mg(2+)</name>
        <dbReference type="ChEBI" id="CHEBI:18420"/>
    </cofactor>
</comment>
<comment type="subcellular location">
    <subcellularLocation>
        <location evidence="1">Cytoplasm</location>
    </subcellularLocation>
</comment>
<comment type="similarity">
    <text evidence="1">Belongs to the P-Pant transferase superfamily. AcpS family.</text>
</comment>
<accession>A8I3B0</accession>
<evidence type="ECO:0000255" key="1">
    <source>
        <dbReference type="HAMAP-Rule" id="MF_00101"/>
    </source>
</evidence>
<proteinExistence type="inferred from homology"/>